<evidence type="ECO:0000255" key="1">
    <source>
        <dbReference type="HAMAP-Rule" id="MF_01961"/>
    </source>
</evidence>
<evidence type="ECO:0000256" key="2">
    <source>
        <dbReference type="SAM" id="MobiDB-lite"/>
    </source>
</evidence>
<gene>
    <name evidence="1" type="primary">katG</name>
</gene>
<sequence length="740" mass="81230">MPEDRPIEDSPPIGEAQTDAPAGGCPAGFGRIKPPVAGGSNXDWWPNQLNMKILQKNPDVINPLDEDFDYRSAVQNLDVDALRADIVEVMHTSQDWWPADFGHYGPLFIRMAWHAAGTYRVSDGRGGAGAGMQRFAPLNSWPDNASLDKARRLLWPVKKKYGKNLSWADLIVYAGNVALEDMGFRTAGFAFGREDRWEPEEDVYWGPEQEWLDRTKRYTGERDLENPLAAVQMGLIYVNPEGPNGNPDPQASAIDIRETFGRMAMNDVETAALIVGGHTFGKTHGNGDASLVGPEPEAAPLEEVGLGWRNPQGTGVGKDAITSGLEVTWTHTPTKWDNSFLEILYGNEWELTKSPAGANQWKPKDNGWANSVPLAHEDGKTHPSMLTSDLALRVDPIYEQITRRWLDHPEELAEEFAKAWFKLLHRDMGPVTRYLGPEVPKDTWLWQDNIPAGNDLSDDEVAKLKELIADSGLTVSQLVSTAWKAASTFRSSDLRGGANGGRIRLQPQLGWEANEPDELAQVVRKYEEIQKASGINVSFADLVVLGGNVGVEKAAKAAGFDVTVPFTPGRGDATQEETDVDSFAYLEPKADGFRNYLGKGSDLPAEFKLIDRANLLGLSAPEMTTLVGGLRVLDVNHGGTKHGVLTDKPGALTTDFFVNLLDMSTAWKPSPADDGTYIGTDRATGSPKWTGTRVDLVFASNSQLRALAEVYAEDDSKEKFVKDFVAAWTKVMDADRFDVA</sequence>
<keyword id="KW-0349">Heme</keyword>
<keyword id="KW-0376">Hydrogen peroxide</keyword>
<keyword id="KW-0408">Iron</keyword>
<keyword id="KW-0479">Metal-binding</keyword>
<keyword id="KW-0560">Oxidoreductase</keyword>
<keyword id="KW-0575">Peroxidase</keyword>
<accession>P0C580</accession>
<accession>O05763</accession>
<accession>Q59557</accession>
<reference key="1">
    <citation type="submission" date="1997-04" db="EMBL/GenBank/DDBJ databases">
        <authorList>
            <person name="Engler O."/>
            <person name="Telenti A."/>
        </authorList>
    </citation>
    <scope>NUCLEOTIDE SEQUENCE [GENOMIC DNA]</scope>
    <source>
        <strain>mc(2)1216</strain>
    </source>
</reference>
<organism>
    <name type="scientific">Mycolicibacterium smegmatis</name>
    <name type="common">Mycobacterium smegmatis</name>
    <dbReference type="NCBI Taxonomy" id="1772"/>
    <lineage>
        <taxon>Bacteria</taxon>
        <taxon>Bacillati</taxon>
        <taxon>Actinomycetota</taxon>
        <taxon>Actinomycetes</taxon>
        <taxon>Mycobacteriales</taxon>
        <taxon>Mycobacteriaceae</taxon>
        <taxon>Mycolicibacterium</taxon>
    </lineage>
</organism>
<proteinExistence type="inferred from homology"/>
<name>KATG_MYCSM</name>
<feature type="chain" id="PRO_0000055573" description="Catalase-peroxidase">
    <location>
        <begin position="1"/>
        <end position="740"/>
    </location>
</feature>
<feature type="region of interest" description="Disordered" evidence="2">
    <location>
        <begin position="1"/>
        <end position="32"/>
    </location>
</feature>
<feature type="active site" description="Proton acceptor" evidence="1">
    <location>
        <position position="114"/>
    </location>
</feature>
<feature type="binding site" description="axial binding residue" evidence="1">
    <location>
        <position position="278"/>
    </location>
    <ligand>
        <name>heme b</name>
        <dbReference type="ChEBI" id="CHEBI:60344"/>
    </ligand>
    <ligandPart>
        <name>Fe</name>
        <dbReference type="ChEBI" id="CHEBI:18248"/>
    </ligandPart>
</feature>
<feature type="site" description="Transition state stabilizer" evidence="1">
    <location>
        <position position="110"/>
    </location>
</feature>
<feature type="cross-link" description="Tryptophyl-tyrosyl-methioninium (Trp-Tyr) (with M-263)" evidence="1">
    <location>
        <begin position="113"/>
        <end position="237"/>
    </location>
</feature>
<feature type="cross-link" description="Tryptophyl-tyrosyl-methioninium (Tyr-Met) (with W-113)" evidence="1">
    <location>
        <begin position="237"/>
        <end position="263"/>
    </location>
</feature>
<comment type="function">
    <text evidence="1">Bifunctional enzyme with both catalase and broad-spectrum peroxidase activity. May play a role in the intracellular survival of mycobacteria (By similarity).</text>
</comment>
<comment type="catalytic activity">
    <reaction evidence="1">
        <text>H2O2 + AH2 = A + 2 H2O</text>
        <dbReference type="Rhea" id="RHEA:30275"/>
        <dbReference type="ChEBI" id="CHEBI:13193"/>
        <dbReference type="ChEBI" id="CHEBI:15377"/>
        <dbReference type="ChEBI" id="CHEBI:16240"/>
        <dbReference type="ChEBI" id="CHEBI:17499"/>
        <dbReference type="EC" id="1.11.1.21"/>
    </reaction>
</comment>
<comment type="catalytic activity">
    <reaction evidence="1">
        <text>2 H2O2 = O2 + 2 H2O</text>
        <dbReference type="Rhea" id="RHEA:20309"/>
        <dbReference type="ChEBI" id="CHEBI:15377"/>
        <dbReference type="ChEBI" id="CHEBI:15379"/>
        <dbReference type="ChEBI" id="CHEBI:16240"/>
        <dbReference type="EC" id="1.11.1.21"/>
    </reaction>
</comment>
<comment type="cofactor">
    <cofactor evidence="1">
        <name>heme b</name>
        <dbReference type="ChEBI" id="CHEBI:60344"/>
    </cofactor>
    <text evidence="1">Binds 1 heme b (iron(II)-protoporphyrin IX) group per dimer.</text>
</comment>
<comment type="subunit">
    <text evidence="1">Homodimer or homotetramer.</text>
</comment>
<comment type="PTM">
    <text evidence="1">Formation of the three residue Trp-Tyr-Met cross-link is important for the catalase, but not the peroxidase activity of the enzyme.</text>
</comment>
<comment type="similarity">
    <text evidence="1">Belongs to the peroxidase family. Peroxidase/catalase subfamily.</text>
</comment>
<protein>
    <recommendedName>
        <fullName evidence="1">Catalase-peroxidase</fullName>
        <shortName evidence="1">CP</shortName>
        <ecNumber evidence="1">1.11.1.21</ecNumber>
    </recommendedName>
    <alternativeName>
        <fullName evidence="1">Peroxidase/catalase</fullName>
    </alternativeName>
</protein>
<dbReference type="EC" id="1.11.1.21" evidence="1"/>
<dbReference type="EMBL" id="U46844">
    <property type="protein sequence ID" value="AAC45275.1"/>
    <property type="molecule type" value="Genomic_DNA"/>
</dbReference>
<dbReference type="PeroxiBase" id="2435">
    <property type="entry name" value="MsmCP01_imm30"/>
</dbReference>
<dbReference type="GO" id="GO:0005829">
    <property type="term" value="C:cytosol"/>
    <property type="evidence" value="ECO:0007669"/>
    <property type="project" value="TreeGrafter"/>
</dbReference>
<dbReference type="GO" id="GO:0004096">
    <property type="term" value="F:catalase activity"/>
    <property type="evidence" value="ECO:0007669"/>
    <property type="project" value="UniProtKB-UniRule"/>
</dbReference>
<dbReference type="GO" id="GO:0020037">
    <property type="term" value="F:heme binding"/>
    <property type="evidence" value="ECO:0007669"/>
    <property type="project" value="InterPro"/>
</dbReference>
<dbReference type="GO" id="GO:0046872">
    <property type="term" value="F:metal ion binding"/>
    <property type="evidence" value="ECO:0007669"/>
    <property type="project" value="UniProtKB-KW"/>
</dbReference>
<dbReference type="GO" id="GO:0070301">
    <property type="term" value="P:cellular response to hydrogen peroxide"/>
    <property type="evidence" value="ECO:0007669"/>
    <property type="project" value="TreeGrafter"/>
</dbReference>
<dbReference type="GO" id="GO:0042744">
    <property type="term" value="P:hydrogen peroxide catabolic process"/>
    <property type="evidence" value="ECO:0007669"/>
    <property type="project" value="UniProtKB-KW"/>
</dbReference>
<dbReference type="CDD" id="cd00649">
    <property type="entry name" value="catalase_peroxidase_1"/>
    <property type="match status" value="1"/>
</dbReference>
<dbReference type="CDD" id="cd08200">
    <property type="entry name" value="catalase_peroxidase_2"/>
    <property type="match status" value="1"/>
</dbReference>
<dbReference type="FunFam" id="1.10.420.10:FF:000004">
    <property type="entry name" value="Catalase-peroxidase"/>
    <property type="match status" value="1"/>
</dbReference>
<dbReference type="FunFam" id="1.10.520.10:FF:000002">
    <property type="entry name" value="Catalase-peroxidase"/>
    <property type="match status" value="1"/>
</dbReference>
<dbReference type="Gene3D" id="1.10.520.10">
    <property type="match status" value="2"/>
</dbReference>
<dbReference type="Gene3D" id="1.10.420.10">
    <property type="entry name" value="Peroxidase, domain 2"/>
    <property type="match status" value="2"/>
</dbReference>
<dbReference type="HAMAP" id="MF_01961">
    <property type="entry name" value="Catal_peroxid"/>
    <property type="match status" value="1"/>
</dbReference>
<dbReference type="InterPro" id="IPR000763">
    <property type="entry name" value="Catalase_peroxidase"/>
</dbReference>
<dbReference type="InterPro" id="IPR002016">
    <property type="entry name" value="Haem_peroxidase"/>
</dbReference>
<dbReference type="InterPro" id="IPR010255">
    <property type="entry name" value="Haem_peroxidase_sf"/>
</dbReference>
<dbReference type="InterPro" id="IPR019794">
    <property type="entry name" value="Peroxidases_AS"/>
</dbReference>
<dbReference type="InterPro" id="IPR019793">
    <property type="entry name" value="Peroxidases_heam-ligand_BS"/>
</dbReference>
<dbReference type="NCBIfam" id="TIGR00198">
    <property type="entry name" value="cat_per_HPI"/>
    <property type="match status" value="1"/>
</dbReference>
<dbReference type="NCBIfam" id="NF011635">
    <property type="entry name" value="PRK15061.1"/>
    <property type="match status" value="1"/>
</dbReference>
<dbReference type="PANTHER" id="PTHR30555:SF0">
    <property type="entry name" value="CATALASE-PEROXIDASE"/>
    <property type="match status" value="1"/>
</dbReference>
<dbReference type="PANTHER" id="PTHR30555">
    <property type="entry name" value="HYDROPEROXIDASE I, BIFUNCTIONAL CATALASE-PEROXIDASE"/>
    <property type="match status" value="1"/>
</dbReference>
<dbReference type="Pfam" id="PF00141">
    <property type="entry name" value="peroxidase"/>
    <property type="match status" value="2"/>
</dbReference>
<dbReference type="PRINTS" id="PR00460">
    <property type="entry name" value="BPEROXIDASE"/>
</dbReference>
<dbReference type="PRINTS" id="PR00458">
    <property type="entry name" value="PEROXIDASE"/>
</dbReference>
<dbReference type="SUPFAM" id="SSF48113">
    <property type="entry name" value="Heme-dependent peroxidases"/>
    <property type="match status" value="2"/>
</dbReference>
<dbReference type="PROSITE" id="PS00435">
    <property type="entry name" value="PEROXIDASE_1"/>
    <property type="match status" value="1"/>
</dbReference>
<dbReference type="PROSITE" id="PS00436">
    <property type="entry name" value="PEROXIDASE_2"/>
    <property type="match status" value="1"/>
</dbReference>
<dbReference type="PROSITE" id="PS50873">
    <property type="entry name" value="PEROXIDASE_4"/>
    <property type="match status" value="1"/>
</dbReference>